<accession>Q2LVI9</accession>
<protein>
    <recommendedName>
        <fullName evidence="1">Glycine--tRNA ligase beta subunit</fullName>
        <ecNumber evidence="1">6.1.1.14</ecNumber>
    </recommendedName>
    <alternativeName>
        <fullName evidence="1">Glycyl-tRNA synthetase beta subunit</fullName>
        <shortName evidence="1">GlyRS</shortName>
    </alternativeName>
</protein>
<sequence length="690" mass="77603">MSNELLLEIGTEEIPAAFLPKALQDMSSMIRKALTEARIPFGQVHTFGTPRRLCLAVADVAEKQEDQVIEKLGPARRVSFDADGNPTKAALGFAKSQGVDISEIGTMQTDKGEYICISRHISGKSTVSLLSEMLSRLITSLSFKKSMRWGNLDFRFARPIHWILALYGGEVIPFRIENIESGATSRGHRFMHPEAFPVSNLQEYLARTREHFVIVAPEERKRIILEEARKAAAAVSGRVLENEDLLETVTYLVEYPTIVCGSFDRKYLELPKEVLITSMMSHQKYFPVVDQEGRLLPFFITINNTLARDPAVVTRGNEKVIRARLSDAQFFFEEDQKIRLDDRVEGLQQVVFHTLLGTSYEKVQRFRKLAGWIADRIDPSLKNRVNRSALLAKADLDTQMVGEFSELQGIMGREYALLAGEDPTVARAIYEHYLPLTAGGDLPQTHEGAIVSIADKMDSIAGFFGVNLVPTGTADPYALRRQALGVINIILDKKYPLTLDDLVDECISILEEKLKRPAEETRKDVIEFFRGRLENMLISQGHPHDVVSAVLAAGFADLVQVIKKIEAMESFKAHPAYEPLAIAFKRAGNILKEFRNGRIDPALFSAAEENQLYSTLLEARARVVKALEKDDYPAALLELAALRQPIDHFFESVMVMVDEENIRFNRLSLLEALFSIFRRIADFSRIVTES</sequence>
<evidence type="ECO:0000255" key="1">
    <source>
        <dbReference type="HAMAP-Rule" id="MF_00255"/>
    </source>
</evidence>
<reference key="1">
    <citation type="journal article" date="2007" name="Proc. Natl. Acad. Sci. U.S.A.">
        <title>The genome of Syntrophus aciditrophicus: life at the thermodynamic limit of microbial growth.</title>
        <authorList>
            <person name="McInerney M.J."/>
            <person name="Rohlin L."/>
            <person name="Mouttaki H."/>
            <person name="Kim U."/>
            <person name="Krupp R.S."/>
            <person name="Rios-Hernandez L."/>
            <person name="Sieber J."/>
            <person name="Struchtemeyer C.G."/>
            <person name="Bhattacharyya A."/>
            <person name="Campbell J.W."/>
            <person name="Gunsalus R.P."/>
        </authorList>
    </citation>
    <scope>NUCLEOTIDE SEQUENCE [LARGE SCALE GENOMIC DNA]</scope>
    <source>
        <strain>SB</strain>
    </source>
</reference>
<name>SYGB_SYNAS</name>
<comment type="catalytic activity">
    <reaction evidence="1">
        <text>tRNA(Gly) + glycine + ATP = glycyl-tRNA(Gly) + AMP + diphosphate</text>
        <dbReference type="Rhea" id="RHEA:16013"/>
        <dbReference type="Rhea" id="RHEA-COMP:9664"/>
        <dbReference type="Rhea" id="RHEA-COMP:9683"/>
        <dbReference type="ChEBI" id="CHEBI:30616"/>
        <dbReference type="ChEBI" id="CHEBI:33019"/>
        <dbReference type="ChEBI" id="CHEBI:57305"/>
        <dbReference type="ChEBI" id="CHEBI:78442"/>
        <dbReference type="ChEBI" id="CHEBI:78522"/>
        <dbReference type="ChEBI" id="CHEBI:456215"/>
        <dbReference type="EC" id="6.1.1.14"/>
    </reaction>
</comment>
<comment type="subunit">
    <text evidence="1">Tetramer of two alpha and two beta subunits.</text>
</comment>
<comment type="subcellular location">
    <subcellularLocation>
        <location evidence="1">Cytoplasm</location>
    </subcellularLocation>
</comment>
<comment type="similarity">
    <text evidence="1">Belongs to the class-II aminoacyl-tRNA synthetase family.</text>
</comment>
<organism>
    <name type="scientific">Syntrophus aciditrophicus (strain SB)</name>
    <dbReference type="NCBI Taxonomy" id="56780"/>
    <lineage>
        <taxon>Bacteria</taxon>
        <taxon>Pseudomonadati</taxon>
        <taxon>Thermodesulfobacteriota</taxon>
        <taxon>Syntrophia</taxon>
        <taxon>Syntrophales</taxon>
        <taxon>Syntrophaceae</taxon>
        <taxon>Syntrophus</taxon>
    </lineage>
</organism>
<keyword id="KW-0030">Aminoacyl-tRNA synthetase</keyword>
<keyword id="KW-0067">ATP-binding</keyword>
<keyword id="KW-0963">Cytoplasm</keyword>
<keyword id="KW-0436">Ligase</keyword>
<keyword id="KW-0547">Nucleotide-binding</keyword>
<keyword id="KW-0648">Protein biosynthesis</keyword>
<keyword id="KW-1185">Reference proteome</keyword>
<proteinExistence type="inferred from homology"/>
<dbReference type="EC" id="6.1.1.14" evidence="1"/>
<dbReference type="EMBL" id="CP000252">
    <property type="protein sequence ID" value="ABC78095.1"/>
    <property type="molecule type" value="Genomic_DNA"/>
</dbReference>
<dbReference type="RefSeq" id="WP_011418115.1">
    <property type="nucleotide sequence ID" value="NC_007759.1"/>
</dbReference>
<dbReference type="SMR" id="Q2LVI9"/>
<dbReference type="FunCoup" id="Q2LVI9">
    <property type="interactions" value="485"/>
</dbReference>
<dbReference type="STRING" id="56780.SYN_01537"/>
<dbReference type="KEGG" id="sat:SYN_01537"/>
<dbReference type="eggNOG" id="COG0751">
    <property type="taxonomic scope" value="Bacteria"/>
</dbReference>
<dbReference type="HOGENOM" id="CLU_007220_2_2_7"/>
<dbReference type="InParanoid" id="Q2LVI9"/>
<dbReference type="OrthoDB" id="9775440at2"/>
<dbReference type="Proteomes" id="UP000001933">
    <property type="component" value="Chromosome"/>
</dbReference>
<dbReference type="GO" id="GO:0005829">
    <property type="term" value="C:cytosol"/>
    <property type="evidence" value="ECO:0007669"/>
    <property type="project" value="TreeGrafter"/>
</dbReference>
<dbReference type="GO" id="GO:0004814">
    <property type="term" value="F:arginine-tRNA ligase activity"/>
    <property type="evidence" value="ECO:0007669"/>
    <property type="project" value="InterPro"/>
</dbReference>
<dbReference type="GO" id="GO:0005524">
    <property type="term" value="F:ATP binding"/>
    <property type="evidence" value="ECO:0007669"/>
    <property type="project" value="UniProtKB-UniRule"/>
</dbReference>
<dbReference type="GO" id="GO:0004820">
    <property type="term" value="F:glycine-tRNA ligase activity"/>
    <property type="evidence" value="ECO:0007669"/>
    <property type="project" value="UniProtKB-UniRule"/>
</dbReference>
<dbReference type="GO" id="GO:0006420">
    <property type="term" value="P:arginyl-tRNA aminoacylation"/>
    <property type="evidence" value="ECO:0007669"/>
    <property type="project" value="InterPro"/>
</dbReference>
<dbReference type="GO" id="GO:0006426">
    <property type="term" value="P:glycyl-tRNA aminoacylation"/>
    <property type="evidence" value="ECO:0007669"/>
    <property type="project" value="UniProtKB-UniRule"/>
</dbReference>
<dbReference type="HAMAP" id="MF_00255">
    <property type="entry name" value="Gly_tRNA_synth_beta"/>
    <property type="match status" value="1"/>
</dbReference>
<dbReference type="InterPro" id="IPR008909">
    <property type="entry name" value="DALR_anticod-bd"/>
</dbReference>
<dbReference type="InterPro" id="IPR015944">
    <property type="entry name" value="Gly-tRNA-synth_bsu"/>
</dbReference>
<dbReference type="InterPro" id="IPR006194">
    <property type="entry name" value="Gly-tRNA-synth_heterodimer"/>
</dbReference>
<dbReference type="NCBIfam" id="TIGR00211">
    <property type="entry name" value="glyS"/>
    <property type="match status" value="1"/>
</dbReference>
<dbReference type="PANTHER" id="PTHR30075:SF2">
    <property type="entry name" value="GLYCINE--TRNA LIGASE, CHLOROPLASTIC_MITOCHONDRIAL 2"/>
    <property type="match status" value="1"/>
</dbReference>
<dbReference type="PANTHER" id="PTHR30075">
    <property type="entry name" value="GLYCYL-TRNA SYNTHETASE"/>
    <property type="match status" value="1"/>
</dbReference>
<dbReference type="Pfam" id="PF05746">
    <property type="entry name" value="DALR_1"/>
    <property type="match status" value="1"/>
</dbReference>
<dbReference type="Pfam" id="PF02092">
    <property type="entry name" value="tRNA_synt_2f"/>
    <property type="match status" value="1"/>
</dbReference>
<dbReference type="PRINTS" id="PR01045">
    <property type="entry name" value="TRNASYNTHGB"/>
</dbReference>
<dbReference type="SUPFAM" id="SSF109604">
    <property type="entry name" value="HD-domain/PDEase-like"/>
    <property type="match status" value="1"/>
</dbReference>
<dbReference type="PROSITE" id="PS50861">
    <property type="entry name" value="AA_TRNA_LIGASE_II_GLYAB"/>
    <property type="match status" value="1"/>
</dbReference>
<feature type="chain" id="PRO_1000006417" description="Glycine--tRNA ligase beta subunit">
    <location>
        <begin position="1"/>
        <end position="690"/>
    </location>
</feature>
<gene>
    <name evidence="1" type="primary">glyS</name>
    <name type="ordered locus">SYNAS_22160</name>
    <name type="ORF">SYN_01537</name>
</gene>